<protein>
    <recommendedName>
        <fullName>Tyrosine aminotransferase</fullName>
        <shortName>TAT</shortName>
        <ecNumber>2.6.1.5</ecNumber>
    </recommendedName>
    <alternativeName>
        <fullName>L-tyrosine:2-oxoglutarate aminotransferase</fullName>
    </alternativeName>
</protein>
<sequence length="417" mass="46485">MQDNVSQRKWNVESSKSANNAFNPIRRIVDKGGFKPNPNKSTISLSIGDPCVFGNLNILDYANDLLIENIKSSKFNGYPPSTGYEIAREAVAKYVETPTSKLTSKDIIVASGASGAIELAIGVLLNEGDNILVPKPGFPLYECTSKTKFINVKHYNLLEKQGFNVDLEHLRSLIDDKTKAILVNNPSNPCGIVYSKQHLLDIIQVAREYCLPIIADEIYSDLTFGEHKFYPMASLTDKVPILSIGGIAKRFLVPGWRLGWVAIHDRDNIFSNGRIIEGLISLSQVILGPNSLVQSILPKLLDPQNTQVKEWCSTITKTLESHSKLTVDMLSKANGLKPVCSSGTMYQMIEIDCSKYEDIADDNEFVGKLLEEQSVFLLQGTVFSLPNFFRIVFCAPIDKLTEAYERIIEFCETHKKK</sequence>
<feature type="chain" id="PRO_0000327651" description="Tyrosine aminotransferase">
    <location>
        <begin position="1"/>
        <end position="417"/>
    </location>
</feature>
<feature type="modified residue" description="N6-(pyridoxal phosphate)lysine" evidence="1">
    <location>
        <position position="249"/>
    </location>
</feature>
<comment type="function">
    <text evidence="1">Transaminase involved in tyrosine breakdown. Converts tyrosine to p-hydroxyphenylpyruvate. Has much lower affinity and transaminase activity towards phenylalanine (By similarity).</text>
</comment>
<comment type="catalytic activity">
    <reaction>
        <text>L-tyrosine + 2-oxoglutarate = 3-(4-hydroxyphenyl)pyruvate + L-glutamate</text>
        <dbReference type="Rhea" id="RHEA:15093"/>
        <dbReference type="ChEBI" id="CHEBI:16810"/>
        <dbReference type="ChEBI" id="CHEBI:29985"/>
        <dbReference type="ChEBI" id="CHEBI:36242"/>
        <dbReference type="ChEBI" id="CHEBI:58315"/>
        <dbReference type="EC" id="2.6.1.5"/>
    </reaction>
</comment>
<comment type="cofactor">
    <cofactor evidence="1">
        <name>pyridoxal 5'-phosphate</name>
        <dbReference type="ChEBI" id="CHEBI:597326"/>
    </cofactor>
</comment>
<comment type="pathway">
    <text>Amino-acid degradation; L-phenylalanine degradation; acetoacetate and fumarate from L-phenylalanine: step 2/6.</text>
</comment>
<comment type="subunit">
    <text evidence="1">Homodimer.</text>
</comment>
<comment type="similarity">
    <text evidence="2">Belongs to the class-I pyridoxal-phosphate-dependent aminotransferase family.</text>
</comment>
<evidence type="ECO:0000250" key="1"/>
<evidence type="ECO:0000305" key="2"/>
<organism>
    <name type="scientific">Dictyostelium discoideum</name>
    <name type="common">Social amoeba</name>
    <dbReference type="NCBI Taxonomy" id="44689"/>
    <lineage>
        <taxon>Eukaryota</taxon>
        <taxon>Amoebozoa</taxon>
        <taxon>Evosea</taxon>
        <taxon>Eumycetozoa</taxon>
        <taxon>Dictyostelia</taxon>
        <taxon>Dictyosteliales</taxon>
        <taxon>Dictyosteliaceae</taxon>
        <taxon>Dictyostelium</taxon>
    </lineage>
</organism>
<gene>
    <name type="primary">tat</name>
    <name type="ORF">DDB_G0287515</name>
</gene>
<accession>Q54K95</accession>
<dbReference type="EC" id="2.6.1.5"/>
<dbReference type="EMBL" id="AAFI02000102">
    <property type="protein sequence ID" value="EAL63657.1"/>
    <property type="molecule type" value="Genomic_DNA"/>
</dbReference>
<dbReference type="RefSeq" id="XP_637160.1">
    <property type="nucleotide sequence ID" value="XM_632068.1"/>
</dbReference>
<dbReference type="SMR" id="Q54K95"/>
<dbReference type="FunCoup" id="Q54K95">
    <property type="interactions" value="33"/>
</dbReference>
<dbReference type="STRING" id="44689.Q54K95"/>
<dbReference type="PaxDb" id="44689-DDB0230996"/>
<dbReference type="EnsemblProtists" id="EAL63657">
    <property type="protein sequence ID" value="EAL63657"/>
    <property type="gene ID" value="DDB_G0287515"/>
</dbReference>
<dbReference type="GeneID" id="8626161"/>
<dbReference type="KEGG" id="ddi:DDB_G0287515"/>
<dbReference type="dictyBase" id="DDB_G0287515">
    <property type="gene designation" value="tat"/>
</dbReference>
<dbReference type="VEuPathDB" id="AmoebaDB:DDB_G0287515"/>
<dbReference type="eggNOG" id="KOG0259">
    <property type="taxonomic scope" value="Eukaryota"/>
</dbReference>
<dbReference type="HOGENOM" id="CLU_017584_4_2_1"/>
<dbReference type="InParanoid" id="Q54K95"/>
<dbReference type="OMA" id="CALDLCI"/>
<dbReference type="PhylomeDB" id="Q54K95"/>
<dbReference type="Reactome" id="R-DDI-8963684">
    <property type="pathway name" value="Tyrosine catabolism"/>
</dbReference>
<dbReference type="UniPathway" id="UPA00139">
    <property type="reaction ID" value="UER00338"/>
</dbReference>
<dbReference type="PRO" id="PR:Q54K95"/>
<dbReference type="Proteomes" id="UP000002195">
    <property type="component" value="Chromosome 5"/>
</dbReference>
<dbReference type="GO" id="GO:0004838">
    <property type="term" value="F:L-tyrosine-2-oxoglutarate transaminase activity"/>
    <property type="evidence" value="ECO:0000250"/>
    <property type="project" value="UniProtKB"/>
</dbReference>
<dbReference type="GO" id="GO:0030170">
    <property type="term" value="F:pyridoxal phosphate binding"/>
    <property type="evidence" value="ECO:0007669"/>
    <property type="project" value="InterPro"/>
</dbReference>
<dbReference type="GO" id="GO:0009058">
    <property type="term" value="P:biosynthetic process"/>
    <property type="evidence" value="ECO:0007669"/>
    <property type="project" value="InterPro"/>
</dbReference>
<dbReference type="GO" id="GO:0006536">
    <property type="term" value="P:glutamate metabolic process"/>
    <property type="evidence" value="ECO:0000250"/>
    <property type="project" value="UniProtKB"/>
</dbReference>
<dbReference type="GO" id="GO:0006559">
    <property type="term" value="P:L-phenylalanine catabolic process"/>
    <property type="evidence" value="ECO:0000318"/>
    <property type="project" value="GO_Central"/>
</dbReference>
<dbReference type="GO" id="GO:0006572">
    <property type="term" value="P:tyrosine catabolic process"/>
    <property type="evidence" value="ECO:0000250"/>
    <property type="project" value="UniProtKB"/>
</dbReference>
<dbReference type="CDD" id="cd00609">
    <property type="entry name" value="AAT_like"/>
    <property type="match status" value="1"/>
</dbReference>
<dbReference type="FunFam" id="3.40.640.10:FF:000048">
    <property type="entry name" value="tyrosine aminotransferase"/>
    <property type="match status" value="1"/>
</dbReference>
<dbReference type="Gene3D" id="3.90.1150.10">
    <property type="entry name" value="Aspartate Aminotransferase, domain 1"/>
    <property type="match status" value="1"/>
</dbReference>
<dbReference type="Gene3D" id="3.40.640.10">
    <property type="entry name" value="Type I PLP-dependent aspartate aminotransferase-like (Major domain)"/>
    <property type="match status" value="1"/>
</dbReference>
<dbReference type="InterPro" id="IPR004839">
    <property type="entry name" value="Aminotransferase_I/II_large"/>
</dbReference>
<dbReference type="InterPro" id="IPR004838">
    <property type="entry name" value="NHTrfase_class1_PyrdxlP-BS"/>
</dbReference>
<dbReference type="InterPro" id="IPR015424">
    <property type="entry name" value="PyrdxlP-dep_Trfase"/>
</dbReference>
<dbReference type="InterPro" id="IPR015421">
    <property type="entry name" value="PyrdxlP-dep_Trfase_major"/>
</dbReference>
<dbReference type="InterPro" id="IPR015422">
    <property type="entry name" value="PyrdxlP-dep_Trfase_small"/>
</dbReference>
<dbReference type="InterPro" id="IPR005958">
    <property type="entry name" value="TyrNic_aminoTrfase"/>
</dbReference>
<dbReference type="InterPro" id="IPR005957">
    <property type="entry name" value="Tyrosine_aminoTrfase"/>
</dbReference>
<dbReference type="NCBIfam" id="TIGR01264">
    <property type="entry name" value="tyr_amTase_E"/>
    <property type="match status" value="1"/>
</dbReference>
<dbReference type="NCBIfam" id="TIGR01265">
    <property type="entry name" value="tyr_nico_aTase"/>
    <property type="match status" value="1"/>
</dbReference>
<dbReference type="PANTHER" id="PTHR45744">
    <property type="entry name" value="TYROSINE AMINOTRANSFERASE"/>
    <property type="match status" value="1"/>
</dbReference>
<dbReference type="PANTHER" id="PTHR45744:SF2">
    <property type="entry name" value="TYROSINE AMINOTRANSFERASE"/>
    <property type="match status" value="1"/>
</dbReference>
<dbReference type="Pfam" id="PF00155">
    <property type="entry name" value="Aminotran_1_2"/>
    <property type="match status" value="1"/>
</dbReference>
<dbReference type="PIRSF" id="PIRSF000517">
    <property type="entry name" value="Tyr_transaminase"/>
    <property type="match status" value="1"/>
</dbReference>
<dbReference type="PRINTS" id="PR00753">
    <property type="entry name" value="ACCSYNTHASE"/>
</dbReference>
<dbReference type="SUPFAM" id="SSF53383">
    <property type="entry name" value="PLP-dependent transferases"/>
    <property type="match status" value="1"/>
</dbReference>
<dbReference type="PROSITE" id="PS00105">
    <property type="entry name" value="AA_TRANSFER_CLASS_1"/>
    <property type="match status" value="1"/>
</dbReference>
<name>ATTY_DICDI</name>
<reference key="1">
    <citation type="journal article" date="2005" name="Nature">
        <title>The genome of the social amoeba Dictyostelium discoideum.</title>
        <authorList>
            <person name="Eichinger L."/>
            <person name="Pachebat J.A."/>
            <person name="Gloeckner G."/>
            <person name="Rajandream M.A."/>
            <person name="Sucgang R."/>
            <person name="Berriman M."/>
            <person name="Song J."/>
            <person name="Olsen R."/>
            <person name="Szafranski K."/>
            <person name="Xu Q."/>
            <person name="Tunggal B."/>
            <person name="Kummerfeld S."/>
            <person name="Madera M."/>
            <person name="Konfortov B.A."/>
            <person name="Rivero F."/>
            <person name="Bankier A.T."/>
            <person name="Lehmann R."/>
            <person name="Hamlin N."/>
            <person name="Davies R."/>
            <person name="Gaudet P."/>
            <person name="Fey P."/>
            <person name="Pilcher K."/>
            <person name="Chen G."/>
            <person name="Saunders D."/>
            <person name="Sodergren E.J."/>
            <person name="Davis P."/>
            <person name="Kerhornou A."/>
            <person name="Nie X."/>
            <person name="Hall N."/>
            <person name="Anjard C."/>
            <person name="Hemphill L."/>
            <person name="Bason N."/>
            <person name="Farbrother P."/>
            <person name="Desany B."/>
            <person name="Just E."/>
            <person name="Morio T."/>
            <person name="Rost R."/>
            <person name="Churcher C.M."/>
            <person name="Cooper J."/>
            <person name="Haydock S."/>
            <person name="van Driessche N."/>
            <person name="Cronin A."/>
            <person name="Goodhead I."/>
            <person name="Muzny D.M."/>
            <person name="Mourier T."/>
            <person name="Pain A."/>
            <person name="Lu M."/>
            <person name="Harper D."/>
            <person name="Lindsay R."/>
            <person name="Hauser H."/>
            <person name="James K.D."/>
            <person name="Quiles M."/>
            <person name="Madan Babu M."/>
            <person name="Saito T."/>
            <person name="Buchrieser C."/>
            <person name="Wardroper A."/>
            <person name="Felder M."/>
            <person name="Thangavelu M."/>
            <person name="Johnson D."/>
            <person name="Knights A."/>
            <person name="Loulseged H."/>
            <person name="Mungall K.L."/>
            <person name="Oliver K."/>
            <person name="Price C."/>
            <person name="Quail M.A."/>
            <person name="Urushihara H."/>
            <person name="Hernandez J."/>
            <person name="Rabbinowitsch E."/>
            <person name="Steffen D."/>
            <person name="Sanders M."/>
            <person name="Ma J."/>
            <person name="Kohara Y."/>
            <person name="Sharp S."/>
            <person name="Simmonds M.N."/>
            <person name="Spiegler S."/>
            <person name="Tivey A."/>
            <person name="Sugano S."/>
            <person name="White B."/>
            <person name="Walker D."/>
            <person name="Woodward J.R."/>
            <person name="Winckler T."/>
            <person name="Tanaka Y."/>
            <person name="Shaulsky G."/>
            <person name="Schleicher M."/>
            <person name="Weinstock G.M."/>
            <person name="Rosenthal A."/>
            <person name="Cox E.C."/>
            <person name="Chisholm R.L."/>
            <person name="Gibbs R.A."/>
            <person name="Loomis W.F."/>
            <person name="Platzer M."/>
            <person name="Kay R.R."/>
            <person name="Williams J.G."/>
            <person name="Dear P.H."/>
            <person name="Noegel A.A."/>
            <person name="Barrell B.G."/>
            <person name="Kuspa A."/>
        </authorList>
    </citation>
    <scope>NUCLEOTIDE SEQUENCE [LARGE SCALE GENOMIC DNA]</scope>
    <source>
        <strain>AX4</strain>
    </source>
</reference>
<keyword id="KW-0032">Aminotransferase</keyword>
<keyword id="KW-0585">Phenylalanine catabolism</keyword>
<keyword id="KW-0663">Pyridoxal phosphate</keyword>
<keyword id="KW-1185">Reference proteome</keyword>
<keyword id="KW-0808">Transferase</keyword>
<keyword id="KW-0828">Tyrosine catabolism</keyword>
<proteinExistence type="inferred from homology"/>